<protein>
    <recommendedName>
        <fullName evidence="1">Large ribosomal subunit protein bL19</fullName>
    </recommendedName>
    <alternativeName>
        <fullName evidence="2">50S ribosomal protein L19</fullName>
    </alternativeName>
</protein>
<sequence length="115" mass="13295">MKNKFVELVEKSQLRTDLPEFNPGDSITVNLWIKEGDKQRIQAFKGFVLRKRNRGLHSAFTVRKMSSGMGVERTFQTHSPLIDSIIVEKRADVRRAKLYYMRGLTGKAARIKEKV</sequence>
<dbReference type="EMBL" id="CP000439">
    <property type="protein sequence ID" value="ABK90423.1"/>
    <property type="molecule type" value="Genomic_DNA"/>
</dbReference>
<dbReference type="RefSeq" id="WP_003035017.1">
    <property type="nucleotide sequence ID" value="NZ_CP009633.1"/>
</dbReference>
<dbReference type="SMR" id="A0Q858"/>
<dbReference type="GeneID" id="75264709"/>
<dbReference type="KEGG" id="ftn:FTN_1559"/>
<dbReference type="KEGG" id="ftx:AW25_439"/>
<dbReference type="BioCyc" id="FTUL401614:G1G75-1611-MONOMER"/>
<dbReference type="Proteomes" id="UP000000762">
    <property type="component" value="Chromosome"/>
</dbReference>
<dbReference type="GO" id="GO:0022625">
    <property type="term" value="C:cytosolic large ribosomal subunit"/>
    <property type="evidence" value="ECO:0007669"/>
    <property type="project" value="TreeGrafter"/>
</dbReference>
<dbReference type="GO" id="GO:0003735">
    <property type="term" value="F:structural constituent of ribosome"/>
    <property type="evidence" value="ECO:0007669"/>
    <property type="project" value="InterPro"/>
</dbReference>
<dbReference type="GO" id="GO:0006412">
    <property type="term" value="P:translation"/>
    <property type="evidence" value="ECO:0007669"/>
    <property type="project" value="UniProtKB-UniRule"/>
</dbReference>
<dbReference type="FunFam" id="2.30.30.790:FF:000001">
    <property type="entry name" value="50S ribosomal protein L19"/>
    <property type="match status" value="1"/>
</dbReference>
<dbReference type="Gene3D" id="2.30.30.790">
    <property type="match status" value="1"/>
</dbReference>
<dbReference type="HAMAP" id="MF_00402">
    <property type="entry name" value="Ribosomal_bL19"/>
    <property type="match status" value="1"/>
</dbReference>
<dbReference type="InterPro" id="IPR001857">
    <property type="entry name" value="Ribosomal_bL19"/>
</dbReference>
<dbReference type="InterPro" id="IPR018257">
    <property type="entry name" value="Ribosomal_bL19_CS"/>
</dbReference>
<dbReference type="InterPro" id="IPR038657">
    <property type="entry name" value="Ribosomal_bL19_sf"/>
</dbReference>
<dbReference type="InterPro" id="IPR008991">
    <property type="entry name" value="Translation_prot_SH3-like_sf"/>
</dbReference>
<dbReference type="NCBIfam" id="TIGR01024">
    <property type="entry name" value="rplS_bact"/>
    <property type="match status" value="1"/>
</dbReference>
<dbReference type="PANTHER" id="PTHR15680:SF9">
    <property type="entry name" value="LARGE RIBOSOMAL SUBUNIT PROTEIN BL19M"/>
    <property type="match status" value="1"/>
</dbReference>
<dbReference type="PANTHER" id="PTHR15680">
    <property type="entry name" value="RIBOSOMAL PROTEIN L19"/>
    <property type="match status" value="1"/>
</dbReference>
<dbReference type="Pfam" id="PF01245">
    <property type="entry name" value="Ribosomal_L19"/>
    <property type="match status" value="1"/>
</dbReference>
<dbReference type="PIRSF" id="PIRSF002191">
    <property type="entry name" value="Ribosomal_L19"/>
    <property type="match status" value="1"/>
</dbReference>
<dbReference type="PRINTS" id="PR00061">
    <property type="entry name" value="RIBOSOMALL19"/>
</dbReference>
<dbReference type="SUPFAM" id="SSF50104">
    <property type="entry name" value="Translation proteins SH3-like domain"/>
    <property type="match status" value="1"/>
</dbReference>
<dbReference type="PROSITE" id="PS01015">
    <property type="entry name" value="RIBOSOMAL_L19"/>
    <property type="match status" value="1"/>
</dbReference>
<accession>A0Q858</accession>
<organism>
    <name type="scientific">Francisella tularensis subsp. novicida (strain U112)</name>
    <dbReference type="NCBI Taxonomy" id="401614"/>
    <lineage>
        <taxon>Bacteria</taxon>
        <taxon>Pseudomonadati</taxon>
        <taxon>Pseudomonadota</taxon>
        <taxon>Gammaproteobacteria</taxon>
        <taxon>Thiotrichales</taxon>
        <taxon>Francisellaceae</taxon>
        <taxon>Francisella</taxon>
    </lineage>
</organism>
<gene>
    <name evidence="1" type="primary">rplS</name>
    <name type="ordered locus">FTN_1559</name>
</gene>
<name>RL19_FRATN</name>
<reference key="1">
    <citation type="journal article" date="2007" name="Genome Biol.">
        <title>Comparison of Francisella tularensis genomes reveals evolutionary events associated with the emergence of human pathogenic strains.</title>
        <authorList>
            <person name="Rohmer L."/>
            <person name="Fong C."/>
            <person name="Abmayr S."/>
            <person name="Wasnick M."/>
            <person name="Larson Freeman T.J."/>
            <person name="Radey M."/>
            <person name="Guina T."/>
            <person name="Svensson K."/>
            <person name="Hayden H.S."/>
            <person name="Jacobs M."/>
            <person name="Gallagher L.A."/>
            <person name="Manoil C."/>
            <person name="Ernst R.K."/>
            <person name="Drees B."/>
            <person name="Buckley D."/>
            <person name="Haugen E."/>
            <person name="Bovee D."/>
            <person name="Zhou Y."/>
            <person name="Chang J."/>
            <person name="Levy R."/>
            <person name="Lim R."/>
            <person name="Gillett W."/>
            <person name="Guenthener D."/>
            <person name="Kang A."/>
            <person name="Shaffer S.A."/>
            <person name="Taylor G."/>
            <person name="Chen J."/>
            <person name="Gallis B."/>
            <person name="D'Argenio D.A."/>
            <person name="Forsman M."/>
            <person name="Olson M.V."/>
            <person name="Goodlett D.R."/>
            <person name="Kaul R."/>
            <person name="Miller S.I."/>
            <person name="Brittnacher M.J."/>
        </authorList>
    </citation>
    <scope>NUCLEOTIDE SEQUENCE [LARGE SCALE GENOMIC DNA]</scope>
    <source>
        <strain>U112</strain>
    </source>
</reference>
<evidence type="ECO:0000255" key="1">
    <source>
        <dbReference type="HAMAP-Rule" id="MF_00402"/>
    </source>
</evidence>
<evidence type="ECO:0000305" key="2"/>
<proteinExistence type="inferred from homology"/>
<keyword id="KW-0687">Ribonucleoprotein</keyword>
<keyword id="KW-0689">Ribosomal protein</keyword>
<comment type="function">
    <text evidence="1">This protein is located at the 30S-50S ribosomal subunit interface and may play a role in the structure and function of the aminoacyl-tRNA binding site.</text>
</comment>
<comment type="similarity">
    <text evidence="1">Belongs to the bacterial ribosomal protein bL19 family.</text>
</comment>
<feature type="chain" id="PRO_1000049678" description="Large ribosomal subunit protein bL19">
    <location>
        <begin position="1"/>
        <end position="115"/>
    </location>
</feature>